<accession>P0CO17</accession>
<accession>Q55US0</accession>
<accession>Q5KHM0</accession>
<keyword id="KW-0010">Activator</keyword>
<keyword id="KW-0067">ATP-binding</keyword>
<keyword id="KW-0175">Coiled coil</keyword>
<keyword id="KW-0227">DNA damage</keyword>
<keyword id="KW-0234">DNA repair</keyword>
<keyword id="KW-0238">DNA-binding</keyword>
<keyword id="KW-0378">Hydrolase</keyword>
<keyword id="KW-0547">Nucleotide-binding</keyword>
<keyword id="KW-0539">Nucleus</keyword>
<keyword id="KW-0804">Transcription</keyword>
<keyword id="KW-0805">Transcription regulation</keyword>
<dbReference type="EC" id="3.6.4.-" evidence="1"/>
<dbReference type="EMBL" id="AAEY01000019">
    <property type="protein sequence ID" value="EAL21342.1"/>
    <property type="molecule type" value="Genomic_DNA"/>
</dbReference>
<dbReference type="RefSeq" id="XP_775989.1">
    <property type="nucleotide sequence ID" value="XM_770896.1"/>
</dbReference>
<dbReference type="SMR" id="P0CO17"/>
<dbReference type="EnsemblFungi" id="AAW43182">
    <property type="protein sequence ID" value="AAW43182"/>
    <property type="gene ID" value="CND06010"/>
</dbReference>
<dbReference type="GeneID" id="4935414"/>
<dbReference type="KEGG" id="cnb:CNBD0390"/>
<dbReference type="VEuPathDB" id="FungiDB:CNBD0390"/>
<dbReference type="HOGENOM" id="CLU_002244_0_0_1"/>
<dbReference type="OrthoDB" id="6797at5206"/>
<dbReference type="GO" id="GO:0031011">
    <property type="term" value="C:Ino80 complex"/>
    <property type="evidence" value="ECO:0007669"/>
    <property type="project" value="InterPro"/>
</dbReference>
<dbReference type="GO" id="GO:0005524">
    <property type="term" value="F:ATP binding"/>
    <property type="evidence" value="ECO:0007669"/>
    <property type="project" value="UniProtKB-KW"/>
</dbReference>
<dbReference type="GO" id="GO:0016887">
    <property type="term" value="F:ATP hydrolysis activity"/>
    <property type="evidence" value="ECO:0007669"/>
    <property type="project" value="RHEA"/>
</dbReference>
<dbReference type="GO" id="GO:0140658">
    <property type="term" value="F:ATP-dependent chromatin remodeler activity"/>
    <property type="evidence" value="ECO:0007669"/>
    <property type="project" value="InterPro"/>
</dbReference>
<dbReference type="GO" id="GO:0003677">
    <property type="term" value="F:DNA binding"/>
    <property type="evidence" value="ECO:0007669"/>
    <property type="project" value="UniProtKB-KW"/>
</dbReference>
<dbReference type="GO" id="GO:0042393">
    <property type="term" value="F:histone binding"/>
    <property type="evidence" value="ECO:0007669"/>
    <property type="project" value="TreeGrafter"/>
</dbReference>
<dbReference type="GO" id="GO:0006281">
    <property type="term" value="P:DNA repair"/>
    <property type="evidence" value="ECO:0007669"/>
    <property type="project" value="UniProtKB-KW"/>
</dbReference>
<dbReference type="GO" id="GO:0006351">
    <property type="term" value="P:DNA-templated transcription"/>
    <property type="evidence" value="ECO:0007669"/>
    <property type="project" value="InterPro"/>
</dbReference>
<dbReference type="GO" id="GO:0060255">
    <property type="term" value="P:regulation of macromolecule metabolic process"/>
    <property type="evidence" value="ECO:0007669"/>
    <property type="project" value="UniProtKB-ARBA"/>
</dbReference>
<dbReference type="CDD" id="cd18002">
    <property type="entry name" value="DEXQc_INO80"/>
    <property type="match status" value="1"/>
</dbReference>
<dbReference type="CDD" id="cd18793">
    <property type="entry name" value="SF2_C_SNF"/>
    <property type="match status" value="1"/>
</dbReference>
<dbReference type="FunFam" id="3.40.50.10810:FF:000022">
    <property type="entry name" value="Blast:Putative DNA helicase Ino80"/>
    <property type="match status" value="1"/>
</dbReference>
<dbReference type="FunFam" id="3.40.50.300:FF:001304">
    <property type="entry name" value="DNA helicase INO80"/>
    <property type="match status" value="1"/>
</dbReference>
<dbReference type="Gene3D" id="3.40.50.300">
    <property type="entry name" value="P-loop containing nucleotide triphosphate hydrolases"/>
    <property type="match status" value="2"/>
</dbReference>
<dbReference type="Gene3D" id="3.40.50.10810">
    <property type="entry name" value="Tandem AAA-ATPase domain"/>
    <property type="match status" value="1"/>
</dbReference>
<dbReference type="InterPro" id="IPR020838">
    <property type="entry name" value="DBINO"/>
</dbReference>
<dbReference type="InterPro" id="IPR031047">
    <property type="entry name" value="DEXQc_INO80"/>
</dbReference>
<dbReference type="InterPro" id="IPR014001">
    <property type="entry name" value="Helicase_ATP-bd"/>
</dbReference>
<dbReference type="InterPro" id="IPR001650">
    <property type="entry name" value="Helicase_C-like"/>
</dbReference>
<dbReference type="InterPro" id="IPR050520">
    <property type="entry name" value="INO80/SWR1_helicase"/>
</dbReference>
<dbReference type="InterPro" id="IPR027417">
    <property type="entry name" value="P-loop_NTPase"/>
</dbReference>
<dbReference type="InterPro" id="IPR038718">
    <property type="entry name" value="SNF2-like_sf"/>
</dbReference>
<dbReference type="InterPro" id="IPR049730">
    <property type="entry name" value="SNF2/RAD54-like_C"/>
</dbReference>
<dbReference type="InterPro" id="IPR000330">
    <property type="entry name" value="SNF2_N"/>
</dbReference>
<dbReference type="PANTHER" id="PTHR45685:SF2">
    <property type="entry name" value="CHROMATIN-REMODELING ATPASE INO80"/>
    <property type="match status" value="1"/>
</dbReference>
<dbReference type="PANTHER" id="PTHR45685">
    <property type="entry name" value="HELICASE SRCAP-RELATED"/>
    <property type="match status" value="1"/>
</dbReference>
<dbReference type="Pfam" id="PF13892">
    <property type="entry name" value="DBINO"/>
    <property type="match status" value="1"/>
</dbReference>
<dbReference type="Pfam" id="PF00271">
    <property type="entry name" value="Helicase_C"/>
    <property type="match status" value="1"/>
</dbReference>
<dbReference type="Pfam" id="PF00176">
    <property type="entry name" value="SNF2-rel_dom"/>
    <property type="match status" value="1"/>
</dbReference>
<dbReference type="SMART" id="SM00487">
    <property type="entry name" value="DEXDc"/>
    <property type="match status" value="1"/>
</dbReference>
<dbReference type="SMART" id="SM00490">
    <property type="entry name" value="HELICc"/>
    <property type="match status" value="1"/>
</dbReference>
<dbReference type="SUPFAM" id="SSF52540">
    <property type="entry name" value="P-loop containing nucleoside triphosphate hydrolases"/>
    <property type="match status" value="2"/>
</dbReference>
<dbReference type="PROSITE" id="PS51413">
    <property type="entry name" value="DBINO"/>
    <property type="match status" value="1"/>
</dbReference>
<dbReference type="PROSITE" id="PS51192">
    <property type="entry name" value="HELICASE_ATP_BIND_1"/>
    <property type="match status" value="1"/>
</dbReference>
<dbReference type="PROSITE" id="PS51194">
    <property type="entry name" value="HELICASE_CTER"/>
    <property type="match status" value="1"/>
</dbReference>
<protein>
    <recommendedName>
        <fullName evidence="1">Chromatin-remodeling ATPase INO80</fullName>
        <ecNumber evidence="1">3.6.4.-</ecNumber>
    </recommendedName>
</protein>
<name>INO80_CRYNB</name>
<feature type="chain" id="PRO_0000410113" description="Chromatin-remodeling ATPase INO80">
    <location>
        <begin position="1"/>
        <end position="1765"/>
    </location>
</feature>
<feature type="domain" description="DBINO" evidence="6">
    <location>
        <begin position="629"/>
        <end position="759"/>
    </location>
</feature>
<feature type="domain" description="Helicase ATP-binding" evidence="4">
    <location>
        <begin position="883"/>
        <end position="1055"/>
    </location>
</feature>
<feature type="domain" description="Helicase C-terminal" evidence="5">
    <location>
        <begin position="1457"/>
        <end position="1607"/>
    </location>
</feature>
<feature type="region of interest" description="Disordered" evidence="7">
    <location>
        <begin position="1"/>
        <end position="66"/>
    </location>
</feature>
<feature type="region of interest" description="Disordered" evidence="7">
    <location>
        <begin position="101"/>
        <end position="200"/>
    </location>
</feature>
<feature type="region of interest" description="Disordered" evidence="7">
    <location>
        <begin position="303"/>
        <end position="342"/>
    </location>
</feature>
<feature type="region of interest" description="Disordered" evidence="7">
    <location>
        <begin position="390"/>
        <end position="446"/>
    </location>
</feature>
<feature type="region of interest" description="Disordered" evidence="7">
    <location>
        <begin position="458"/>
        <end position="588"/>
    </location>
</feature>
<feature type="region of interest" description="Disordered" evidence="7">
    <location>
        <begin position="1680"/>
        <end position="1700"/>
    </location>
</feature>
<feature type="region of interest" description="Disordered" evidence="7">
    <location>
        <begin position="1740"/>
        <end position="1765"/>
    </location>
</feature>
<feature type="coiled-coil region" evidence="3">
    <location>
        <begin position="702"/>
        <end position="745"/>
    </location>
</feature>
<feature type="short sequence motif" description="DEAQ box">
    <location>
        <begin position="1006"/>
        <end position="1009"/>
    </location>
</feature>
<feature type="compositionally biased region" description="Polar residues" evidence="7">
    <location>
        <begin position="17"/>
        <end position="29"/>
    </location>
</feature>
<feature type="compositionally biased region" description="Basic and acidic residues" evidence="7">
    <location>
        <begin position="101"/>
        <end position="113"/>
    </location>
</feature>
<feature type="compositionally biased region" description="Basic and acidic residues" evidence="7">
    <location>
        <begin position="161"/>
        <end position="173"/>
    </location>
</feature>
<feature type="compositionally biased region" description="Pro residues" evidence="7">
    <location>
        <begin position="175"/>
        <end position="186"/>
    </location>
</feature>
<feature type="compositionally biased region" description="Low complexity" evidence="7">
    <location>
        <begin position="304"/>
        <end position="318"/>
    </location>
</feature>
<feature type="compositionally biased region" description="Basic residues" evidence="7">
    <location>
        <begin position="407"/>
        <end position="419"/>
    </location>
</feature>
<feature type="compositionally biased region" description="Basic and acidic residues" evidence="7">
    <location>
        <begin position="420"/>
        <end position="429"/>
    </location>
</feature>
<feature type="compositionally biased region" description="Basic and acidic residues" evidence="7">
    <location>
        <begin position="552"/>
        <end position="563"/>
    </location>
</feature>
<feature type="binding site" evidence="4">
    <location>
        <begin position="896"/>
        <end position="903"/>
    </location>
    <ligand>
        <name>ATP</name>
        <dbReference type="ChEBI" id="CHEBI:30616"/>
    </ligand>
</feature>
<evidence type="ECO:0000250" key="1">
    <source>
        <dbReference type="UniProtKB" id="P53115"/>
    </source>
</evidence>
<evidence type="ECO:0000250" key="2">
    <source>
        <dbReference type="UniProtKB" id="Q9ULG1"/>
    </source>
</evidence>
<evidence type="ECO:0000255" key="3"/>
<evidence type="ECO:0000255" key="4">
    <source>
        <dbReference type="PROSITE-ProRule" id="PRU00541"/>
    </source>
</evidence>
<evidence type="ECO:0000255" key="5">
    <source>
        <dbReference type="PROSITE-ProRule" id="PRU00542"/>
    </source>
</evidence>
<evidence type="ECO:0000255" key="6">
    <source>
        <dbReference type="PROSITE-ProRule" id="PRU00746"/>
    </source>
</evidence>
<evidence type="ECO:0000256" key="7">
    <source>
        <dbReference type="SAM" id="MobiDB-lite"/>
    </source>
</evidence>
<evidence type="ECO:0000305" key="8"/>
<reference key="1">
    <citation type="journal article" date="2005" name="Science">
        <title>The genome of the basidiomycetous yeast and human pathogen Cryptococcus neoformans.</title>
        <authorList>
            <person name="Loftus B.J."/>
            <person name="Fung E."/>
            <person name="Roncaglia P."/>
            <person name="Rowley D."/>
            <person name="Amedeo P."/>
            <person name="Bruno D."/>
            <person name="Vamathevan J."/>
            <person name="Miranda M."/>
            <person name="Anderson I.J."/>
            <person name="Fraser J.A."/>
            <person name="Allen J.E."/>
            <person name="Bosdet I.E."/>
            <person name="Brent M.R."/>
            <person name="Chiu R."/>
            <person name="Doering T.L."/>
            <person name="Donlin M.J."/>
            <person name="D'Souza C.A."/>
            <person name="Fox D.S."/>
            <person name="Grinberg V."/>
            <person name="Fu J."/>
            <person name="Fukushima M."/>
            <person name="Haas B.J."/>
            <person name="Huang J.C."/>
            <person name="Janbon G."/>
            <person name="Jones S.J.M."/>
            <person name="Koo H.L."/>
            <person name="Krzywinski M.I."/>
            <person name="Kwon-Chung K.J."/>
            <person name="Lengeler K.B."/>
            <person name="Maiti R."/>
            <person name="Marra M.A."/>
            <person name="Marra R.E."/>
            <person name="Mathewson C.A."/>
            <person name="Mitchell T.G."/>
            <person name="Pertea M."/>
            <person name="Riggs F.R."/>
            <person name="Salzberg S.L."/>
            <person name="Schein J.E."/>
            <person name="Shvartsbeyn A."/>
            <person name="Shin H."/>
            <person name="Shumway M."/>
            <person name="Specht C.A."/>
            <person name="Suh B.B."/>
            <person name="Tenney A."/>
            <person name="Utterback T.R."/>
            <person name="Wickes B.L."/>
            <person name="Wortman J.R."/>
            <person name="Wye N.H."/>
            <person name="Kronstad J.W."/>
            <person name="Lodge J.K."/>
            <person name="Heitman J."/>
            <person name="Davis R.W."/>
            <person name="Fraser C.M."/>
            <person name="Hyman R.W."/>
        </authorList>
    </citation>
    <scope>NUCLEOTIDE SEQUENCE [LARGE SCALE GENOMIC DNA]</scope>
    <source>
        <strain>B-3501A</strain>
    </source>
</reference>
<organism>
    <name type="scientific">Cryptococcus neoformans var. neoformans serotype D (strain B-3501A)</name>
    <name type="common">Filobasidiella neoformans</name>
    <dbReference type="NCBI Taxonomy" id="283643"/>
    <lineage>
        <taxon>Eukaryota</taxon>
        <taxon>Fungi</taxon>
        <taxon>Dikarya</taxon>
        <taxon>Basidiomycota</taxon>
        <taxon>Agaricomycotina</taxon>
        <taxon>Tremellomycetes</taxon>
        <taxon>Tremellales</taxon>
        <taxon>Cryptococcaceae</taxon>
        <taxon>Cryptococcus</taxon>
        <taxon>Cryptococcus neoformans species complex</taxon>
    </lineage>
</organism>
<comment type="function">
    <text evidence="6">ATPase component of the INO80 complex which remodels chromatin by shifting nucleosomes and is involved in DNA repair.</text>
</comment>
<comment type="catalytic activity">
    <reaction evidence="1">
        <text>ATP + H2O = ADP + phosphate + H(+)</text>
        <dbReference type="Rhea" id="RHEA:13065"/>
        <dbReference type="ChEBI" id="CHEBI:15377"/>
        <dbReference type="ChEBI" id="CHEBI:15378"/>
        <dbReference type="ChEBI" id="CHEBI:30616"/>
        <dbReference type="ChEBI" id="CHEBI:43474"/>
        <dbReference type="ChEBI" id="CHEBI:456216"/>
    </reaction>
</comment>
<comment type="subunit">
    <text evidence="6">Component of the INO80 chromatin-remodeling complex.</text>
</comment>
<comment type="subcellular location">
    <subcellularLocation>
        <location evidence="6">Nucleus</location>
    </subcellularLocation>
</comment>
<comment type="domain">
    <text evidence="2">The DBINO region is involved in binding to DNA.</text>
</comment>
<comment type="similarity">
    <text evidence="8">Belongs to the SNF2/RAD54 helicase family.</text>
</comment>
<gene>
    <name type="primary">INO80</name>
    <name type="ordered locus">CNBD0390</name>
</gene>
<proteinExistence type="inferred from homology"/>
<sequence length="1765" mass="196403">MGAMDDRRYSYPPPRTSYVQPSTHPSPTASDYRYRSPVLPQHPPTHHSPSSYSASLYGQPKEDPAIAYARMREEMRTAEEARREAEALEYRRKRDMEFAARRPGSELMDDPRRIPHSSFPRSQMYGPSADQSRVMPSRNGKDYISEPPSPSELYPTDEDTERLPIDRYRRDIDVPPLPRQLPPPPSEIGRMADRARSPSAPIAPPLLKVVRKRTKVIRPNDFLVGNEDVWEDGLIRYQSKREDEVRAIAQWAASCQVRNGVGEPSLPQTQDESIKVRKINGDIATPTNKKKRKSRKLNLDDELLGLASSPPGSPNAAAEAEKSESKHHIYGMNGPIDPANPPSPSTIVYPSGLTRAEVIAKCEAGDVEGLTEDDVKAVQDEMWMREKAAQAAENGGVLPTNKDGTVRRKPGPAKGWRKIRGIDKKKETTPGKAQSTTAGSVAGSVADEEAEADIAALLDDSIAKKGKKVKRRKLEEPGAESPRFADAEDEYNEHRPSDSVLLDEIEDEHSRAGSVGESNALDTLPAASAPPKKKNSKTKEPGVGKGRWTRPTKPEKELVKKAEALASRTSKASLAGPSDDTFGVGPGPAEEVQEEIKHEYAPNTHDPRGVSENEAKIRHELVEDLQKQAWSNIVRDVPRIYRVFQGYDQSMKQIAQRRAQACVRNAFGQRNQKTMQRQSGKVNKEGAAKAKRIVKELAAFWRKNEKDEVIARKKAEREALERAKAEEEARETKRQSRKLNFLLTQTELYSHFIGKKIKTKEAEAAEGMDVEEEEKRGMEEIAIGEDGEPLPDLDYDEDDEENLRKHAARGAQAAIQAARDKARAFDDSIVGRGAPLPGDDTMDGDELNFQNPSLGENSVTITQPKMLMAQLKEYQLKGLTWLGNLYEQGINGILADEMGLGKTIQSISLLAYLAEHHNLWGPFLVIAPASTLHNWQQELARFVPRLKALPYWGSPKDRETLRKIWSRKNQTFSEDSPFHILITSYQLAVQDEKYLQGMKWQYMILDEAQAIKSSSSARWKSLLSLHCRNRLLLTGTPIQNSMHELWALLHFIMPQLFDSHEEFAEWFSKDIESSSGGVTGNLKPEQLKRLHMILKPFMLRRVKKHVQKELGDKIEIDLLVDLSQRQREIYKALRQRVSITDLLATAENNTDNGNPKNMRSLVNLVMQFRKVCNHPDLFERADVVSPFVFGEFSQSGNLAREGDGMYLPDSARNAIEVQIPRILWTDGGKLDIPGEQSLAGSDTKILQNLLNIWTPEWINERTKCADAEFGFVKLVGSSPGETSRSAKSPVLVQLLEGAEKERRWTEEGRFVDDSEFAASVKKGFRVPSVIPVLTQPGQVSLREISRRVWDESYLSRDDARCIGDYAIAPIVKPIASNRSFLNAQDRILNQPLAHSTLYGLAPSELHDPLAAEQFSRIAPSVPLTGLIPSSASSQTPVSPLHIPPTKRLIVDSAKLARLDSLLRELKAGGHRVLLYFQMTKMMDLIEEYLIFRQYKYLRLDGSSPIAERRDMVTSWQTNPDIFVFCLSTRAGGLGINLTAADTVIFYDHDWNPSSDAQAMDRAHRVGQTKQVTVYRLVARGTIEERILQMARGKKDIQDVVVGTKSVSDVAKPSEIVSLFMDDEELAESVAKRKQAEAHGYIAPTIIPNGRRSQFGDGLVLDDGEGDDGFFNAAAAARANAEEEEGLGAEEESKGKGKAKAAAAVTFPVPGEKRSHKKGMGKKAQAAAAAAALERVIAGNEEPLAASKPPAKKKVKIALGPDGLPL</sequence>